<sequence length="167" mass="19552">MLPMITEFINYGQQTIRAARYIGQGFMITLSHANRLPVTIQYPYEKLITSERFRGRIHFEFDKCIACEVCVRVCPIDLPVVDWKLETDIRKKRLLNYSIDFGICIFCGNCVEYCPTNCLSMTEEYELSTYDRHELNYNQIALGRLPMSVIDDYTIRTISNLPQIKNE</sequence>
<evidence type="ECO:0000255" key="1">
    <source>
        <dbReference type="HAMAP-Rule" id="MF_01351"/>
    </source>
</evidence>
<geneLocation type="chloroplast"/>
<proteinExistence type="inferred from homology"/>
<accession>Q3C1Q0</accession>
<protein>
    <recommendedName>
        <fullName evidence="1">NAD(P)H-quinone oxidoreductase subunit I, chloroplastic</fullName>
        <ecNumber evidence="1">7.1.1.-</ecNumber>
    </recommendedName>
    <alternativeName>
        <fullName evidence="1">NAD(P)H dehydrogenase subunit I</fullName>
        <shortName evidence="1">NDH subunit I</shortName>
    </alternativeName>
    <alternativeName>
        <fullName evidence="1">NADH-plastoquinone oxidoreductase subunit I</fullName>
    </alternativeName>
</protein>
<gene>
    <name evidence="1" type="primary">ndhI</name>
</gene>
<reference key="1">
    <citation type="journal article" date="2006" name="Mol. Genet. Genomics">
        <title>The chloroplast genome of Nicotiana sylvestris and Nicotiana tomentosiformis: complete sequencing confirms that the Nicotiana sylvestris progenitor is the maternal genome donor of Nicotiana tabacum.</title>
        <authorList>
            <person name="Yukawa M."/>
            <person name="Tsudzuki T."/>
            <person name="Sugiura M."/>
        </authorList>
    </citation>
    <scope>NUCLEOTIDE SEQUENCE [LARGE SCALE GENOMIC DNA]</scope>
</reference>
<organism>
    <name type="scientific">Nicotiana sylvestris</name>
    <name type="common">Wood tobacco</name>
    <name type="synonym">South American tobacco</name>
    <dbReference type="NCBI Taxonomy" id="4096"/>
    <lineage>
        <taxon>Eukaryota</taxon>
        <taxon>Viridiplantae</taxon>
        <taxon>Streptophyta</taxon>
        <taxon>Embryophyta</taxon>
        <taxon>Tracheophyta</taxon>
        <taxon>Spermatophyta</taxon>
        <taxon>Magnoliopsida</taxon>
        <taxon>eudicotyledons</taxon>
        <taxon>Gunneridae</taxon>
        <taxon>Pentapetalae</taxon>
        <taxon>asterids</taxon>
        <taxon>lamiids</taxon>
        <taxon>Solanales</taxon>
        <taxon>Solanaceae</taxon>
        <taxon>Nicotianoideae</taxon>
        <taxon>Nicotianeae</taxon>
        <taxon>Nicotiana</taxon>
    </lineage>
</organism>
<name>NDHI_NICSY</name>
<comment type="function">
    <text evidence="1">NDH shuttles electrons from NAD(P)H:plastoquinone, via FMN and iron-sulfur (Fe-S) centers, to quinones in the photosynthetic chain and possibly in a chloroplast respiratory chain. The immediate electron acceptor for the enzyme in this species is believed to be plastoquinone. Couples the redox reaction to proton translocation, and thus conserves the redox energy in a proton gradient.</text>
</comment>
<comment type="catalytic activity">
    <reaction evidence="1">
        <text>a plastoquinone + NADH + (n+1) H(+)(in) = a plastoquinol + NAD(+) + n H(+)(out)</text>
        <dbReference type="Rhea" id="RHEA:42608"/>
        <dbReference type="Rhea" id="RHEA-COMP:9561"/>
        <dbReference type="Rhea" id="RHEA-COMP:9562"/>
        <dbReference type="ChEBI" id="CHEBI:15378"/>
        <dbReference type="ChEBI" id="CHEBI:17757"/>
        <dbReference type="ChEBI" id="CHEBI:57540"/>
        <dbReference type="ChEBI" id="CHEBI:57945"/>
        <dbReference type="ChEBI" id="CHEBI:62192"/>
    </reaction>
</comment>
<comment type="catalytic activity">
    <reaction evidence="1">
        <text>a plastoquinone + NADPH + (n+1) H(+)(in) = a plastoquinol + NADP(+) + n H(+)(out)</text>
        <dbReference type="Rhea" id="RHEA:42612"/>
        <dbReference type="Rhea" id="RHEA-COMP:9561"/>
        <dbReference type="Rhea" id="RHEA-COMP:9562"/>
        <dbReference type="ChEBI" id="CHEBI:15378"/>
        <dbReference type="ChEBI" id="CHEBI:17757"/>
        <dbReference type="ChEBI" id="CHEBI:57783"/>
        <dbReference type="ChEBI" id="CHEBI:58349"/>
        <dbReference type="ChEBI" id="CHEBI:62192"/>
    </reaction>
</comment>
<comment type="cofactor">
    <cofactor evidence="1">
        <name>[4Fe-4S] cluster</name>
        <dbReference type="ChEBI" id="CHEBI:49883"/>
    </cofactor>
    <text evidence="1">Binds 2 [4Fe-4S] clusters per subunit.</text>
</comment>
<comment type="subunit">
    <text evidence="1">NDH is composed of at least 16 different subunits, 5 of which are encoded in the nucleus.</text>
</comment>
<comment type="subcellular location">
    <subcellularLocation>
        <location evidence="1">Plastid</location>
        <location evidence="1">Chloroplast thylakoid membrane</location>
        <topology evidence="1">Peripheral membrane protein</topology>
    </subcellularLocation>
</comment>
<comment type="similarity">
    <text evidence="1">Belongs to the complex I 23 kDa subunit family.</text>
</comment>
<feature type="chain" id="PRO_0000245666" description="NAD(P)H-quinone oxidoreductase subunit I, chloroplastic">
    <location>
        <begin position="1"/>
        <end position="167"/>
    </location>
</feature>
<feature type="domain" description="4Fe-4S ferredoxin-type 1" evidence="1">
    <location>
        <begin position="55"/>
        <end position="84"/>
    </location>
</feature>
<feature type="domain" description="4Fe-4S ferredoxin-type 2" evidence="1">
    <location>
        <begin position="95"/>
        <end position="124"/>
    </location>
</feature>
<feature type="binding site" evidence="1">
    <location>
        <position position="64"/>
    </location>
    <ligand>
        <name>[4Fe-4S] cluster</name>
        <dbReference type="ChEBI" id="CHEBI:49883"/>
        <label>1</label>
    </ligand>
</feature>
<feature type="binding site" evidence="1">
    <location>
        <position position="67"/>
    </location>
    <ligand>
        <name>[4Fe-4S] cluster</name>
        <dbReference type="ChEBI" id="CHEBI:49883"/>
        <label>1</label>
    </ligand>
</feature>
<feature type="binding site" evidence="1">
    <location>
        <position position="70"/>
    </location>
    <ligand>
        <name>[4Fe-4S] cluster</name>
        <dbReference type="ChEBI" id="CHEBI:49883"/>
        <label>1</label>
    </ligand>
</feature>
<feature type="binding site" evidence="1">
    <location>
        <position position="74"/>
    </location>
    <ligand>
        <name>[4Fe-4S] cluster</name>
        <dbReference type="ChEBI" id="CHEBI:49883"/>
        <label>2</label>
    </ligand>
</feature>
<feature type="binding site" evidence="1">
    <location>
        <position position="104"/>
    </location>
    <ligand>
        <name>[4Fe-4S] cluster</name>
        <dbReference type="ChEBI" id="CHEBI:49883"/>
        <label>2</label>
    </ligand>
</feature>
<feature type="binding site" evidence="1">
    <location>
        <position position="107"/>
    </location>
    <ligand>
        <name>[4Fe-4S] cluster</name>
        <dbReference type="ChEBI" id="CHEBI:49883"/>
        <label>2</label>
    </ligand>
</feature>
<feature type="binding site" evidence="1">
    <location>
        <position position="110"/>
    </location>
    <ligand>
        <name>[4Fe-4S] cluster</name>
        <dbReference type="ChEBI" id="CHEBI:49883"/>
        <label>2</label>
    </ligand>
</feature>
<feature type="binding site" evidence="1">
    <location>
        <position position="114"/>
    </location>
    <ligand>
        <name>[4Fe-4S] cluster</name>
        <dbReference type="ChEBI" id="CHEBI:49883"/>
        <label>1</label>
    </ligand>
</feature>
<dbReference type="EC" id="7.1.1.-" evidence="1"/>
<dbReference type="EMBL" id="AB237912">
    <property type="protein sequence ID" value="BAE46718.1"/>
    <property type="molecule type" value="Genomic_DNA"/>
</dbReference>
<dbReference type="RefSeq" id="YP_358741.1">
    <property type="nucleotide sequence ID" value="NC_007500.1"/>
</dbReference>
<dbReference type="SMR" id="Q3C1Q0"/>
<dbReference type="GeneID" id="3735067"/>
<dbReference type="KEGG" id="nsy:3735067"/>
<dbReference type="OrthoDB" id="17149at4085"/>
<dbReference type="Proteomes" id="UP000189701">
    <property type="component" value="Chloroplast Pltd"/>
</dbReference>
<dbReference type="GO" id="GO:0009535">
    <property type="term" value="C:chloroplast thylakoid membrane"/>
    <property type="evidence" value="ECO:0007669"/>
    <property type="project" value="UniProtKB-SubCell"/>
</dbReference>
<dbReference type="GO" id="GO:0051539">
    <property type="term" value="F:4 iron, 4 sulfur cluster binding"/>
    <property type="evidence" value="ECO:0007669"/>
    <property type="project" value="UniProtKB-KW"/>
</dbReference>
<dbReference type="GO" id="GO:0005506">
    <property type="term" value="F:iron ion binding"/>
    <property type="evidence" value="ECO:0007669"/>
    <property type="project" value="UniProtKB-UniRule"/>
</dbReference>
<dbReference type="GO" id="GO:0008137">
    <property type="term" value="F:NADH dehydrogenase (ubiquinone) activity"/>
    <property type="evidence" value="ECO:0007669"/>
    <property type="project" value="InterPro"/>
</dbReference>
<dbReference type="GO" id="GO:0048038">
    <property type="term" value="F:quinone binding"/>
    <property type="evidence" value="ECO:0007669"/>
    <property type="project" value="UniProtKB-KW"/>
</dbReference>
<dbReference type="GO" id="GO:0019684">
    <property type="term" value="P:photosynthesis, light reaction"/>
    <property type="evidence" value="ECO:0007669"/>
    <property type="project" value="UniProtKB-UniRule"/>
</dbReference>
<dbReference type="FunFam" id="3.30.70.3270:FF:000006">
    <property type="entry name" value="NAD(P)H-quinone oxidoreductase subunit I, chloroplastic"/>
    <property type="match status" value="1"/>
</dbReference>
<dbReference type="Gene3D" id="3.30.70.3270">
    <property type="match status" value="1"/>
</dbReference>
<dbReference type="HAMAP" id="MF_01351">
    <property type="entry name" value="NDH1_NuoI"/>
    <property type="match status" value="1"/>
</dbReference>
<dbReference type="InterPro" id="IPR017896">
    <property type="entry name" value="4Fe4S_Fe-S-bd"/>
</dbReference>
<dbReference type="InterPro" id="IPR017900">
    <property type="entry name" value="4Fe4S_Fe_S_CS"/>
</dbReference>
<dbReference type="InterPro" id="IPR010226">
    <property type="entry name" value="NADH_quinone_OxRdtase_chainI"/>
</dbReference>
<dbReference type="InterPro" id="IPR004497">
    <property type="entry name" value="NDHI"/>
</dbReference>
<dbReference type="NCBIfam" id="TIGR00403">
    <property type="entry name" value="ndhI"/>
    <property type="match status" value="1"/>
</dbReference>
<dbReference type="NCBIfam" id="TIGR01971">
    <property type="entry name" value="NuoI"/>
    <property type="match status" value="1"/>
</dbReference>
<dbReference type="NCBIfam" id="NF004537">
    <property type="entry name" value="PRK05888.1-3"/>
    <property type="match status" value="1"/>
</dbReference>
<dbReference type="PANTHER" id="PTHR47275">
    <property type="entry name" value="NAD(P)H-QUINONE OXIDOREDUCTASE SUBUNIT I, CHLOROPLASTIC"/>
    <property type="match status" value="1"/>
</dbReference>
<dbReference type="PANTHER" id="PTHR47275:SF1">
    <property type="entry name" value="NAD(P)H-QUINONE OXIDOREDUCTASE SUBUNIT I, CHLOROPLASTIC"/>
    <property type="match status" value="1"/>
</dbReference>
<dbReference type="Pfam" id="PF00037">
    <property type="entry name" value="Fer4"/>
    <property type="match status" value="2"/>
</dbReference>
<dbReference type="SUPFAM" id="SSF54862">
    <property type="entry name" value="4Fe-4S ferredoxins"/>
    <property type="match status" value="1"/>
</dbReference>
<dbReference type="PROSITE" id="PS00198">
    <property type="entry name" value="4FE4S_FER_1"/>
    <property type="match status" value="2"/>
</dbReference>
<dbReference type="PROSITE" id="PS51379">
    <property type="entry name" value="4FE4S_FER_2"/>
    <property type="match status" value="2"/>
</dbReference>
<keyword id="KW-0004">4Fe-4S</keyword>
<keyword id="KW-0150">Chloroplast</keyword>
<keyword id="KW-0408">Iron</keyword>
<keyword id="KW-0411">Iron-sulfur</keyword>
<keyword id="KW-0472">Membrane</keyword>
<keyword id="KW-0479">Metal-binding</keyword>
<keyword id="KW-0520">NAD</keyword>
<keyword id="KW-0521">NADP</keyword>
<keyword id="KW-0934">Plastid</keyword>
<keyword id="KW-0618">Plastoquinone</keyword>
<keyword id="KW-0874">Quinone</keyword>
<keyword id="KW-1185">Reference proteome</keyword>
<keyword id="KW-0677">Repeat</keyword>
<keyword id="KW-0793">Thylakoid</keyword>
<keyword id="KW-1278">Translocase</keyword>